<organism>
    <name type="scientific">Methanococcus maripaludis (strain DSM 14266 / JCM 13030 / NBRC 101832 / S2 / LL)</name>
    <dbReference type="NCBI Taxonomy" id="267377"/>
    <lineage>
        <taxon>Archaea</taxon>
        <taxon>Methanobacteriati</taxon>
        <taxon>Methanobacteriota</taxon>
        <taxon>Methanomada group</taxon>
        <taxon>Methanococci</taxon>
        <taxon>Methanococcales</taxon>
        <taxon>Methanococcaceae</taxon>
        <taxon>Methanococcus</taxon>
    </lineage>
</organism>
<feature type="chain" id="PRO_0000130005" description="Small ribosomal subunit protein uS19">
    <location>
        <begin position="1"/>
        <end position="161"/>
    </location>
</feature>
<feature type="region of interest" description="Disordered" evidence="2">
    <location>
        <begin position="1"/>
        <end position="26"/>
    </location>
</feature>
<feature type="compositionally biased region" description="Basic residues" evidence="2">
    <location>
        <begin position="1"/>
        <end position="19"/>
    </location>
</feature>
<comment type="function">
    <text evidence="1">Protein S19 forms a complex with S13 that binds strongly to the 16S ribosomal RNA.</text>
</comment>
<comment type="similarity">
    <text evidence="1">Belongs to the universal ribosomal protein uS19 family.</text>
</comment>
<evidence type="ECO:0000255" key="1">
    <source>
        <dbReference type="HAMAP-Rule" id="MF_00531"/>
    </source>
</evidence>
<evidence type="ECO:0000256" key="2">
    <source>
        <dbReference type="SAM" id="MobiDB-lite"/>
    </source>
</evidence>
<evidence type="ECO:0000305" key="3"/>
<reference key="1">
    <citation type="journal article" date="2004" name="J. Bacteriol.">
        <title>Complete genome sequence of the genetically tractable hydrogenotrophic methanogen Methanococcus maripaludis.</title>
        <authorList>
            <person name="Hendrickson E.L."/>
            <person name="Kaul R."/>
            <person name="Zhou Y."/>
            <person name="Bovee D."/>
            <person name="Chapman P."/>
            <person name="Chung J."/>
            <person name="Conway de Macario E."/>
            <person name="Dodsworth J.A."/>
            <person name="Gillett W."/>
            <person name="Graham D.E."/>
            <person name="Hackett M."/>
            <person name="Haydock A.K."/>
            <person name="Kang A."/>
            <person name="Land M.L."/>
            <person name="Levy R."/>
            <person name="Lie T.J."/>
            <person name="Major T.A."/>
            <person name="Moore B.C."/>
            <person name="Porat I."/>
            <person name="Palmeiri A."/>
            <person name="Rouse G."/>
            <person name="Saenphimmachak C."/>
            <person name="Soell D."/>
            <person name="Van Dien S."/>
            <person name="Wang T."/>
            <person name="Whitman W.B."/>
            <person name="Xia Q."/>
            <person name="Zhang Y."/>
            <person name="Larimer F.W."/>
            <person name="Olson M.V."/>
            <person name="Leigh J.A."/>
        </authorList>
    </citation>
    <scope>NUCLEOTIDE SEQUENCE [LARGE SCALE GENOMIC DNA]</scope>
    <source>
        <strain>DSM 14266 / JCM 13030 / NBRC 101832 / S2 / LL</strain>
    </source>
</reference>
<sequence length="161" mass="18524">MARQKKYSGKGGARKKNKQKQNVAPRRRVEFKYKGFSLEELQEMPIKKFMEIVPSRQRRTMARGITPKQRKLVMKIKKARRLTNRGKDARVIRTHCRDFVITPEMIGLTFGIYNGKEFKEIKLVEETVGRFLGEMAPTRGVVQHGSPGMGATRGSMFVPIK</sequence>
<gene>
    <name evidence="1" type="primary">rps19</name>
    <name type="ordered locus">MMP1547</name>
</gene>
<keyword id="KW-1185">Reference proteome</keyword>
<keyword id="KW-0687">Ribonucleoprotein</keyword>
<keyword id="KW-0689">Ribosomal protein</keyword>
<keyword id="KW-0694">RNA-binding</keyword>
<keyword id="KW-0699">rRNA-binding</keyword>
<accession>Q6LX07</accession>
<name>RS19_METMP</name>
<protein>
    <recommendedName>
        <fullName evidence="1">Small ribosomal subunit protein uS19</fullName>
    </recommendedName>
    <alternativeName>
        <fullName evidence="3">30S ribosomal protein S19</fullName>
    </alternativeName>
</protein>
<proteinExistence type="inferred from homology"/>
<dbReference type="EMBL" id="BX950229">
    <property type="protein sequence ID" value="CAF31103.1"/>
    <property type="molecule type" value="Genomic_DNA"/>
</dbReference>
<dbReference type="RefSeq" id="WP_011171491.1">
    <property type="nucleotide sequence ID" value="NC_005791.1"/>
</dbReference>
<dbReference type="SMR" id="Q6LX07"/>
<dbReference type="STRING" id="267377.MMP1547"/>
<dbReference type="EnsemblBacteria" id="CAF31103">
    <property type="protein sequence ID" value="CAF31103"/>
    <property type="gene ID" value="MMP1547"/>
</dbReference>
<dbReference type="KEGG" id="mmp:MMP1547"/>
<dbReference type="PATRIC" id="fig|267377.15.peg.1584"/>
<dbReference type="eggNOG" id="arCOG04099">
    <property type="taxonomic scope" value="Archaea"/>
</dbReference>
<dbReference type="HOGENOM" id="CLU_097347_1_1_2"/>
<dbReference type="OrthoDB" id="30559at2157"/>
<dbReference type="Proteomes" id="UP000000590">
    <property type="component" value="Chromosome"/>
</dbReference>
<dbReference type="GO" id="GO:0022627">
    <property type="term" value="C:cytosolic small ribosomal subunit"/>
    <property type="evidence" value="ECO:0007669"/>
    <property type="project" value="TreeGrafter"/>
</dbReference>
<dbReference type="GO" id="GO:0019843">
    <property type="term" value="F:rRNA binding"/>
    <property type="evidence" value="ECO:0007669"/>
    <property type="project" value="UniProtKB-UniRule"/>
</dbReference>
<dbReference type="GO" id="GO:0003735">
    <property type="term" value="F:structural constituent of ribosome"/>
    <property type="evidence" value="ECO:0007669"/>
    <property type="project" value="InterPro"/>
</dbReference>
<dbReference type="GO" id="GO:0000028">
    <property type="term" value="P:ribosomal small subunit assembly"/>
    <property type="evidence" value="ECO:0007669"/>
    <property type="project" value="TreeGrafter"/>
</dbReference>
<dbReference type="GO" id="GO:0006412">
    <property type="term" value="P:translation"/>
    <property type="evidence" value="ECO:0007669"/>
    <property type="project" value="UniProtKB-UniRule"/>
</dbReference>
<dbReference type="FunFam" id="3.30.860.10:FF:000002">
    <property type="entry name" value="40S ribosomal protein S15"/>
    <property type="match status" value="1"/>
</dbReference>
<dbReference type="Gene3D" id="3.30.860.10">
    <property type="entry name" value="30s Ribosomal Protein S19, Chain A"/>
    <property type="match status" value="1"/>
</dbReference>
<dbReference type="HAMAP" id="MF_00531">
    <property type="entry name" value="Ribosomal_uS19"/>
    <property type="match status" value="1"/>
</dbReference>
<dbReference type="InterPro" id="IPR002222">
    <property type="entry name" value="Ribosomal_uS19"/>
</dbReference>
<dbReference type="InterPro" id="IPR020934">
    <property type="entry name" value="Ribosomal_uS19_CS"/>
</dbReference>
<dbReference type="InterPro" id="IPR005713">
    <property type="entry name" value="Ribosomal_uS19_euk/arc"/>
</dbReference>
<dbReference type="InterPro" id="IPR023575">
    <property type="entry name" value="Ribosomal_uS19_SF"/>
</dbReference>
<dbReference type="NCBIfam" id="NF003121">
    <property type="entry name" value="PRK04038.1"/>
    <property type="match status" value="1"/>
</dbReference>
<dbReference type="NCBIfam" id="TIGR01025">
    <property type="entry name" value="uS19_arch"/>
    <property type="match status" value="1"/>
</dbReference>
<dbReference type="PANTHER" id="PTHR11880">
    <property type="entry name" value="RIBOSOMAL PROTEIN S19P FAMILY MEMBER"/>
    <property type="match status" value="1"/>
</dbReference>
<dbReference type="PANTHER" id="PTHR11880:SF2">
    <property type="entry name" value="SMALL RIBOSOMAL SUBUNIT PROTEIN US19"/>
    <property type="match status" value="1"/>
</dbReference>
<dbReference type="Pfam" id="PF00203">
    <property type="entry name" value="Ribosomal_S19"/>
    <property type="match status" value="1"/>
</dbReference>
<dbReference type="PIRSF" id="PIRSF002144">
    <property type="entry name" value="Ribosomal_S19"/>
    <property type="match status" value="1"/>
</dbReference>
<dbReference type="PRINTS" id="PR00975">
    <property type="entry name" value="RIBOSOMALS19"/>
</dbReference>
<dbReference type="SUPFAM" id="SSF54570">
    <property type="entry name" value="Ribosomal protein S19"/>
    <property type="match status" value="1"/>
</dbReference>
<dbReference type="PROSITE" id="PS00323">
    <property type="entry name" value="RIBOSOMAL_S19"/>
    <property type="match status" value="1"/>
</dbReference>